<dbReference type="SMR" id="P0C5I8"/>
<dbReference type="GO" id="GO:0005576">
    <property type="term" value="C:extracellular region"/>
    <property type="evidence" value="ECO:0007669"/>
    <property type="project" value="UniProtKB-SubCell"/>
</dbReference>
<dbReference type="GO" id="GO:0019871">
    <property type="term" value="F:sodium channel inhibitor activity"/>
    <property type="evidence" value="ECO:0007669"/>
    <property type="project" value="InterPro"/>
</dbReference>
<dbReference type="GO" id="GO:0090729">
    <property type="term" value="F:toxin activity"/>
    <property type="evidence" value="ECO:0007669"/>
    <property type="project" value="UniProtKB-KW"/>
</dbReference>
<dbReference type="GO" id="GO:0006952">
    <property type="term" value="P:defense response"/>
    <property type="evidence" value="ECO:0007669"/>
    <property type="project" value="InterPro"/>
</dbReference>
<dbReference type="CDD" id="cd23106">
    <property type="entry name" value="neurotoxins_LC_scorpion"/>
    <property type="match status" value="1"/>
</dbReference>
<dbReference type="Gene3D" id="3.30.30.10">
    <property type="entry name" value="Knottin, scorpion toxin-like"/>
    <property type="match status" value="1"/>
</dbReference>
<dbReference type="InterPro" id="IPR044062">
    <property type="entry name" value="LCN-type_CS_alpha_beta_dom"/>
</dbReference>
<dbReference type="InterPro" id="IPR003614">
    <property type="entry name" value="Scorpion_toxin-like"/>
</dbReference>
<dbReference type="InterPro" id="IPR036574">
    <property type="entry name" value="Scorpion_toxin-like_sf"/>
</dbReference>
<dbReference type="InterPro" id="IPR018218">
    <property type="entry name" value="Scorpion_toxinL"/>
</dbReference>
<dbReference type="InterPro" id="IPR002061">
    <property type="entry name" value="Scorpion_toxinL/defensin"/>
</dbReference>
<dbReference type="Pfam" id="PF00537">
    <property type="entry name" value="Toxin_3"/>
    <property type="match status" value="1"/>
</dbReference>
<dbReference type="PRINTS" id="PR00285">
    <property type="entry name" value="SCORPNTOXIN"/>
</dbReference>
<dbReference type="SMART" id="SM00505">
    <property type="entry name" value="Knot1"/>
    <property type="match status" value="1"/>
</dbReference>
<dbReference type="SUPFAM" id="SSF57095">
    <property type="entry name" value="Scorpion toxin-like"/>
    <property type="match status" value="1"/>
</dbReference>
<dbReference type="PROSITE" id="PS51863">
    <property type="entry name" value="LCN_CSAB"/>
    <property type="match status" value="1"/>
</dbReference>
<accession>P0C5I8</accession>
<feature type="signal peptide">
    <location>
        <begin position="1"/>
        <end position="21"/>
    </location>
</feature>
<feature type="chain" id="PRO_0000307616" description="Beta-insect depressant toxin Lqh-dprIT3f">
    <location>
        <begin position="22"/>
        <end position="82"/>
    </location>
</feature>
<feature type="domain" description="LCN-type CS-alpha/beta" evidence="2">
    <location>
        <begin position="22"/>
        <end position="82"/>
    </location>
</feature>
<feature type="modified residue" description="Glycine amide" evidence="1">
    <location>
        <position position="82"/>
    </location>
</feature>
<feature type="disulfide bond" evidence="2">
    <location>
        <begin position="31"/>
        <end position="81"/>
    </location>
</feature>
<feature type="disulfide bond" evidence="2">
    <location>
        <begin position="35"/>
        <end position="56"/>
    </location>
</feature>
<feature type="disulfide bond" evidence="2">
    <location>
        <begin position="42"/>
        <end position="63"/>
    </location>
</feature>
<feature type="disulfide bond" evidence="2">
    <location>
        <begin position="46"/>
        <end position="65"/>
    </location>
</feature>
<sequence>MKLLLLLTISASMLIEGLVNADGYIRGGDGCKVSCVINHVFCDNECKAAGGSYGYCWGWGLACWCEGLPADREWDYETDTCGGKK</sequence>
<protein>
    <recommendedName>
        <fullName>Beta-insect depressant toxin Lqh-dprIT3f</fullName>
    </recommendedName>
</protein>
<evidence type="ECO:0000250" key="1"/>
<evidence type="ECO:0000255" key="2">
    <source>
        <dbReference type="PROSITE-ProRule" id="PRU01210"/>
    </source>
</evidence>
<evidence type="ECO:0000269" key="3">
    <source>
    </source>
</evidence>
<evidence type="ECO:0000305" key="4"/>
<keyword id="KW-0027">Amidation</keyword>
<keyword id="KW-0903">Direct protein sequencing</keyword>
<keyword id="KW-1015">Disulfide bond</keyword>
<keyword id="KW-0872">Ion channel impairing toxin</keyword>
<keyword id="KW-0528">Neurotoxin</keyword>
<keyword id="KW-0964">Secreted</keyword>
<keyword id="KW-0732">Signal</keyword>
<keyword id="KW-0800">Toxin</keyword>
<keyword id="KW-0738">Voltage-gated sodium channel impairing toxin</keyword>
<name>SIX3F_LEIHE</name>
<reference key="1">
    <citation type="journal article" date="2005" name="Biochemistry">
        <title>Genetic polymorphism and expression of a highly potent scorpion depressant toxin enable refinement of the effects on insect Na channels and illuminate the key role of Asn-58.</title>
        <authorList>
            <person name="Strugatsky D."/>
            <person name="Zilberberg N."/>
            <person name="Stankiewicz M."/>
            <person name="Ilan N."/>
            <person name="Turkov M."/>
            <person name="Cohen L."/>
            <person name="Pelhate M."/>
            <person name="Gilles N."/>
            <person name="Gordon D."/>
            <person name="Gurevitz M."/>
        </authorList>
    </citation>
    <scope>NUCLEOTIDE SEQUENCE [MRNA]</scope>
    <scope>PARTIAL PROTEIN SEQUENCE</scope>
    <scope>FUNCTION</scope>
    <scope>TOXIC DOSE</scope>
    <source>
        <tissue>Venom</tissue>
        <tissue>Venom gland</tissue>
    </source>
</reference>
<proteinExistence type="evidence at protein level"/>
<organism>
    <name type="scientific">Leiurus hebraeus</name>
    <name type="common">Hebrew deathstalker scorpion</name>
    <name type="synonym">Leiurus quinquestriatus hebraeus</name>
    <dbReference type="NCBI Taxonomy" id="2899558"/>
    <lineage>
        <taxon>Eukaryota</taxon>
        <taxon>Metazoa</taxon>
        <taxon>Ecdysozoa</taxon>
        <taxon>Arthropoda</taxon>
        <taxon>Chelicerata</taxon>
        <taxon>Arachnida</taxon>
        <taxon>Scorpiones</taxon>
        <taxon>Buthida</taxon>
        <taxon>Buthoidea</taxon>
        <taxon>Buthidae</taxon>
        <taxon>Leiurus</taxon>
    </lineage>
</organism>
<comment type="function">
    <text evidence="3">Depressant insect beta-toxins cause a transient contraction paralysis followed by a slow flaccid paralysis. They bind voltage-independently at site-4 of sodium channels (Nav) and block action potentials, primarily by depolarizing the axonal membrane and suppressing the sodium current. This depressant toxin is active only on insects. It is found in a relatively small amount in the venom.</text>
</comment>
<comment type="subcellular location">
    <subcellularLocation>
        <location>Secreted</location>
    </subcellularLocation>
</comment>
<comment type="tissue specificity">
    <text>Expressed by the venom gland.</text>
</comment>
<comment type="domain">
    <text evidence="4">Has the structural arrangement of an alpha-helix connected to antiparallel beta-sheets by disulfide bonds (CS-alpha/beta).</text>
</comment>
<comment type="toxic dose">
    <text evidence="3">PD(50) is 19 ng/100 mg of body weight of Sarcophaga larvae for contraction paralysis, and 85 ng/100 mg for flaccid paralysis.</text>
</comment>
<comment type="similarity">
    <text evidence="4">Belongs to the long (4 C-C) scorpion toxin superfamily. Sodium channel inhibitor family. Beta subfamily.</text>
</comment>